<comment type="function">
    <text evidence="1">Part of the ABC transporter complex PhnCDE involved in phosphonates import. Responsible for energy coupling to the transport system.</text>
</comment>
<comment type="catalytic activity">
    <reaction evidence="1">
        <text>phosphonate(out) + ATP + H2O = phosphonate(in) + ADP + phosphate + H(+)</text>
        <dbReference type="Rhea" id="RHEA:18065"/>
        <dbReference type="ChEBI" id="CHEBI:15377"/>
        <dbReference type="ChEBI" id="CHEBI:15378"/>
        <dbReference type="ChEBI" id="CHEBI:16215"/>
        <dbReference type="ChEBI" id="CHEBI:30616"/>
        <dbReference type="ChEBI" id="CHEBI:43474"/>
        <dbReference type="ChEBI" id="CHEBI:456216"/>
        <dbReference type="EC" id="7.3.2.2"/>
    </reaction>
</comment>
<comment type="subunit">
    <text evidence="1">The complex is composed of two ATP-binding proteins (PhnC), two transmembrane proteins (PhnE) and a solute-binding protein (PhnD).</text>
</comment>
<comment type="subcellular location">
    <subcellularLocation>
        <location evidence="1">Cell inner membrane</location>
        <topology evidence="1">Peripheral membrane protein</topology>
    </subcellularLocation>
</comment>
<comment type="similarity">
    <text evidence="1">Belongs to the ABC transporter superfamily. Phosphonates importer (TC 3.A.1.9.1) family.</text>
</comment>
<comment type="sequence caution" evidence="3">
    <conflict type="erroneous initiation">
        <sequence resource="EMBL-CDS" id="CAK05659"/>
    </conflict>
</comment>
<evidence type="ECO:0000255" key="1">
    <source>
        <dbReference type="HAMAP-Rule" id="MF_01713"/>
    </source>
</evidence>
<evidence type="ECO:0000256" key="2">
    <source>
        <dbReference type="SAM" id="MobiDB-lite"/>
    </source>
</evidence>
<evidence type="ECO:0000305" key="3"/>
<accession>Q1MMZ3</accession>
<protein>
    <recommendedName>
        <fullName evidence="1">Phosphonates import ATP-binding protein PhnC</fullName>
        <ecNumber evidence="1">7.3.2.2</ecNumber>
    </recommendedName>
</protein>
<organism>
    <name type="scientific">Rhizobium johnstonii (strain DSM 114642 / LMG 32736 / 3841)</name>
    <name type="common">Rhizobium leguminosarum bv. viciae</name>
    <dbReference type="NCBI Taxonomy" id="216596"/>
    <lineage>
        <taxon>Bacteria</taxon>
        <taxon>Pseudomonadati</taxon>
        <taxon>Pseudomonadota</taxon>
        <taxon>Alphaproteobacteria</taxon>
        <taxon>Hyphomicrobiales</taxon>
        <taxon>Rhizobiaceae</taxon>
        <taxon>Rhizobium/Agrobacterium group</taxon>
        <taxon>Rhizobium</taxon>
        <taxon>Rhizobium johnstonii</taxon>
    </lineage>
</organism>
<reference key="1">
    <citation type="journal article" date="2006" name="Genome Biol.">
        <title>The genome of Rhizobium leguminosarum has recognizable core and accessory components.</title>
        <authorList>
            <person name="Young J.P.W."/>
            <person name="Crossman L.C."/>
            <person name="Johnston A.W.B."/>
            <person name="Thomson N.R."/>
            <person name="Ghazoui Z.F."/>
            <person name="Hull K.H."/>
            <person name="Wexler M."/>
            <person name="Curson A.R.J."/>
            <person name="Todd J.D."/>
            <person name="Poole P.S."/>
            <person name="Mauchline T.H."/>
            <person name="East A.K."/>
            <person name="Quail M.A."/>
            <person name="Churcher C."/>
            <person name="Arrowsmith C."/>
            <person name="Cherevach I."/>
            <person name="Chillingworth T."/>
            <person name="Clarke K."/>
            <person name="Cronin A."/>
            <person name="Davis P."/>
            <person name="Fraser A."/>
            <person name="Hance Z."/>
            <person name="Hauser H."/>
            <person name="Jagels K."/>
            <person name="Moule S."/>
            <person name="Mungall K."/>
            <person name="Norbertczak H."/>
            <person name="Rabbinowitsch E."/>
            <person name="Sanders M."/>
            <person name="Simmonds M."/>
            <person name="Whitehead S."/>
            <person name="Parkhill J."/>
        </authorList>
    </citation>
    <scope>NUCLEOTIDE SEQUENCE [LARGE SCALE GENOMIC DNA]</scope>
    <source>
        <strain>DSM 114642 / LMG 32736 / 3841</strain>
    </source>
</reference>
<name>PHNC_RHIJ3</name>
<dbReference type="EC" id="7.3.2.2" evidence="1"/>
<dbReference type="EMBL" id="AM236080">
    <property type="protein sequence ID" value="CAK05659.1"/>
    <property type="status" value="ALT_INIT"/>
    <property type="molecule type" value="Genomic_DNA"/>
</dbReference>
<dbReference type="SMR" id="Q1MMZ3"/>
<dbReference type="EnsemblBacteria" id="CAK05659">
    <property type="protein sequence ID" value="CAK05659"/>
    <property type="gene ID" value="RL0170"/>
</dbReference>
<dbReference type="KEGG" id="rle:RL0170"/>
<dbReference type="eggNOG" id="COG3638">
    <property type="taxonomic scope" value="Bacteria"/>
</dbReference>
<dbReference type="HOGENOM" id="CLU_000604_1_22_5"/>
<dbReference type="Proteomes" id="UP000006575">
    <property type="component" value="Chromosome"/>
</dbReference>
<dbReference type="GO" id="GO:0005886">
    <property type="term" value="C:plasma membrane"/>
    <property type="evidence" value="ECO:0007669"/>
    <property type="project" value="UniProtKB-SubCell"/>
</dbReference>
<dbReference type="GO" id="GO:0015416">
    <property type="term" value="F:ABC-type phosphonate transporter activity"/>
    <property type="evidence" value="ECO:0007669"/>
    <property type="project" value="UniProtKB-EC"/>
</dbReference>
<dbReference type="GO" id="GO:0005524">
    <property type="term" value="F:ATP binding"/>
    <property type="evidence" value="ECO:0007669"/>
    <property type="project" value="UniProtKB-KW"/>
</dbReference>
<dbReference type="GO" id="GO:0016887">
    <property type="term" value="F:ATP hydrolysis activity"/>
    <property type="evidence" value="ECO:0007669"/>
    <property type="project" value="InterPro"/>
</dbReference>
<dbReference type="CDD" id="cd03256">
    <property type="entry name" value="ABC_PhnC_transporter"/>
    <property type="match status" value="1"/>
</dbReference>
<dbReference type="Gene3D" id="3.40.50.300">
    <property type="entry name" value="P-loop containing nucleotide triphosphate hydrolases"/>
    <property type="match status" value="1"/>
</dbReference>
<dbReference type="InterPro" id="IPR003593">
    <property type="entry name" value="AAA+_ATPase"/>
</dbReference>
<dbReference type="InterPro" id="IPR003439">
    <property type="entry name" value="ABC_transporter-like_ATP-bd"/>
</dbReference>
<dbReference type="InterPro" id="IPR017871">
    <property type="entry name" value="ABC_transporter-like_CS"/>
</dbReference>
<dbReference type="InterPro" id="IPR012693">
    <property type="entry name" value="ABC_transpr_PhnC"/>
</dbReference>
<dbReference type="InterPro" id="IPR050086">
    <property type="entry name" value="MetN_ABC_transporter-like"/>
</dbReference>
<dbReference type="InterPro" id="IPR027417">
    <property type="entry name" value="P-loop_NTPase"/>
</dbReference>
<dbReference type="NCBIfam" id="TIGR02315">
    <property type="entry name" value="ABC_phnC"/>
    <property type="match status" value="1"/>
</dbReference>
<dbReference type="PANTHER" id="PTHR43166">
    <property type="entry name" value="AMINO ACID IMPORT ATP-BINDING PROTEIN"/>
    <property type="match status" value="1"/>
</dbReference>
<dbReference type="PANTHER" id="PTHR43166:SF6">
    <property type="entry name" value="PHOSPHONATES IMPORT ATP-BINDING PROTEIN PHNC"/>
    <property type="match status" value="1"/>
</dbReference>
<dbReference type="Pfam" id="PF00005">
    <property type="entry name" value="ABC_tran"/>
    <property type="match status" value="1"/>
</dbReference>
<dbReference type="SMART" id="SM00382">
    <property type="entry name" value="AAA"/>
    <property type="match status" value="1"/>
</dbReference>
<dbReference type="SUPFAM" id="SSF52540">
    <property type="entry name" value="P-loop containing nucleoside triphosphate hydrolases"/>
    <property type="match status" value="1"/>
</dbReference>
<dbReference type="PROSITE" id="PS00211">
    <property type="entry name" value="ABC_TRANSPORTER_1"/>
    <property type="match status" value="1"/>
</dbReference>
<dbReference type="PROSITE" id="PS50893">
    <property type="entry name" value="ABC_TRANSPORTER_2"/>
    <property type="match status" value="1"/>
</dbReference>
<dbReference type="PROSITE" id="PS51249">
    <property type="entry name" value="PHNC"/>
    <property type="match status" value="1"/>
</dbReference>
<feature type="chain" id="PRO_0000274738" description="Phosphonates import ATP-binding protein PhnC">
    <location>
        <begin position="1"/>
        <end position="280"/>
    </location>
</feature>
<feature type="domain" description="ABC transporter" evidence="1">
    <location>
        <begin position="2"/>
        <end position="245"/>
    </location>
</feature>
<feature type="region of interest" description="Disordered" evidence="2">
    <location>
        <begin position="257"/>
        <end position="280"/>
    </location>
</feature>
<feature type="compositionally biased region" description="Basic and acidic residues" evidence="2">
    <location>
        <begin position="260"/>
        <end position="269"/>
    </location>
</feature>
<feature type="binding site" evidence="1">
    <location>
        <begin position="34"/>
        <end position="41"/>
    </location>
    <ligand>
        <name>ATP</name>
        <dbReference type="ChEBI" id="CHEBI:30616"/>
    </ligand>
</feature>
<sequence length="280" mass="30450">MFELKNVTRRFGKKLAVDSVTLAIAQGQMVGIIGRSGAGKSTLLRMINRLQEPSSGSVHFAGVEVSGLRGQALRNWQRDCAMIFQQFNLVPRLDVLTNVMLGRLNHRSTLMSLLNIFTREERVHAIAALERLGIEQTALQAAGTLSGGQQQRVAIARALMQNPKMVLADEPIASLDPLNAKIVMDALRDINEREGITVITNLHTLDTARNYCERIVGMAGGRVVFDGKPSELTAEAVKEIYGTDKDGAGIDETMTSTSLESKRRAEDVSSGRVAKAAAVH</sequence>
<proteinExistence type="inferred from homology"/>
<gene>
    <name evidence="1" type="primary">phnC</name>
    <name type="synonym">phoC</name>
    <name type="ordered locus">RL0170</name>
</gene>
<keyword id="KW-0067">ATP-binding</keyword>
<keyword id="KW-0997">Cell inner membrane</keyword>
<keyword id="KW-1003">Cell membrane</keyword>
<keyword id="KW-0472">Membrane</keyword>
<keyword id="KW-0547">Nucleotide-binding</keyword>
<keyword id="KW-0918">Phosphonate transport</keyword>
<keyword id="KW-1278">Translocase</keyword>
<keyword id="KW-0813">Transport</keyword>